<gene>
    <name evidence="1" type="primary">alaS</name>
    <name type="ordered locus">OB2009</name>
</gene>
<protein>
    <recommendedName>
        <fullName evidence="1">Alanine--tRNA ligase</fullName>
        <ecNumber evidence="1">6.1.1.7</ecNumber>
    </recommendedName>
    <alternativeName>
        <fullName evidence="1">Alanyl-tRNA synthetase</fullName>
        <shortName evidence="1">AlaRS</shortName>
    </alternativeName>
</protein>
<feature type="chain" id="PRO_0000075164" description="Alanine--tRNA ligase">
    <location>
        <begin position="1"/>
        <end position="879"/>
    </location>
</feature>
<feature type="binding site" evidence="1">
    <location>
        <position position="566"/>
    </location>
    <ligand>
        <name>Zn(2+)</name>
        <dbReference type="ChEBI" id="CHEBI:29105"/>
    </ligand>
</feature>
<feature type="binding site" evidence="1">
    <location>
        <position position="570"/>
    </location>
    <ligand>
        <name>Zn(2+)</name>
        <dbReference type="ChEBI" id="CHEBI:29105"/>
    </ligand>
</feature>
<feature type="binding site" evidence="1">
    <location>
        <position position="668"/>
    </location>
    <ligand>
        <name>Zn(2+)</name>
        <dbReference type="ChEBI" id="CHEBI:29105"/>
    </ligand>
</feature>
<feature type="binding site" evidence="1">
    <location>
        <position position="672"/>
    </location>
    <ligand>
        <name>Zn(2+)</name>
        <dbReference type="ChEBI" id="CHEBI:29105"/>
    </ligand>
</feature>
<proteinExistence type="inferred from homology"/>
<comment type="function">
    <text evidence="1">Catalyzes the attachment of alanine to tRNA(Ala) in a two-step reaction: alanine is first activated by ATP to form Ala-AMP and then transferred to the acceptor end of tRNA(Ala). Also edits incorrectly charged Ser-tRNA(Ala) and Gly-tRNA(Ala) via its editing domain.</text>
</comment>
<comment type="catalytic activity">
    <reaction evidence="1">
        <text>tRNA(Ala) + L-alanine + ATP = L-alanyl-tRNA(Ala) + AMP + diphosphate</text>
        <dbReference type="Rhea" id="RHEA:12540"/>
        <dbReference type="Rhea" id="RHEA-COMP:9657"/>
        <dbReference type="Rhea" id="RHEA-COMP:9923"/>
        <dbReference type="ChEBI" id="CHEBI:30616"/>
        <dbReference type="ChEBI" id="CHEBI:33019"/>
        <dbReference type="ChEBI" id="CHEBI:57972"/>
        <dbReference type="ChEBI" id="CHEBI:78442"/>
        <dbReference type="ChEBI" id="CHEBI:78497"/>
        <dbReference type="ChEBI" id="CHEBI:456215"/>
        <dbReference type="EC" id="6.1.1.7"/>
    </reaction>
</comment>
<comment type="cofactor">
    <cofactor evidence="1">
        <name>Zn(2+)</name>
        <dbReference type="ChEBI" id="CHEBI:29105"/>
    </cofactor>
    <text evidence="1">Binds 1 zinc ion per subunit.</text>
</comment>
<comment type="subcellular location">
    <subcellularLocation>
        <location evidence="1">Cytoplasm</location>
    </subcellularLocation>
</comment>
<comment type="domain">
    <text evidence="1">Consists of three domains; the N-terminal catalytic domain, the editing domain and the C-terminal C-Ala domain. The editing domain removes incorrectly charged amino acids, while the C-Ala domain, along with tRNA(Ala), serves as a bridge to cooperatively bring together the editing and aminoacylation centers thus stimulating deacylation of misacylated tRNAs.</text>
</comment>
<comment type="similarity">
    <text evidence="1">Belongs to the class-II aminoacyl-tRNA synthetase family.</text>
</comment>
<accession>Q8EPS9</accession>
<sequence length="879" mass="99248">MKSLTSAEIRQMFIDFFKEKSHSVEPSASLVPHEDPTLLWINSGVATLKKYFDGRVIPDNPRIVNAQKSIRTNDIENVGYTARHHTFFEMLGNFSIGDYFKKEAMEWAWEFLTDEKWINFDEALLSVTVHPEDDEAYDIWLNDIGIPKERIIRIEENFWDIGEGPSGPNTEIFYDRGESYGNDPQDPELYPGGENNRYLEVWNLVFSQFNHNPDDTYTPLPKKNIDTGMGLERLTSIIQQVPTNFETDLFMPIIRETERISKRKYGNSEAEDTSFKVIADHIRTVSFAIGDGAMPSNEGRGYVLRRLIRRAIRFAKDLGVNEPFMYQLVPVVGDIMKDFYPEVQKDAGYISNVIKVEEERFHETLNDGLIILASIIEEERKKGSEVFPGEEVFRLYDTYGFPKELTEEYVEQQGFTVNQAGYDKEMNKQRERARNARQKVDSMQVQDTIFTEINVDSTFVGYDQLQKETTIEALVKDKNQIEEANQGDVLYVFLKETPFYAESGGQVADNGWIYSENASAYVSDVQKSPNGDHIHQIEIKEGSFKINQPVHAVVERTFRNHVIKNHTATHLLHQALKDVLGSHVNQAGSLVRPERLRFDFSHFHGVTAEELQQIELKVNEKIWESLPVAIDSKKIDEAKAMGAMALFGEKYGDIVRVVQIGDYSIELCGGCHVINTAEIGLFKIVQETGIGAGTRRIEAVTSKQAYDYLNTKLDLLHNSAQKLKTSEEQLPERIEGLQVELKDSQKQVDSLSAKLSNLEASSILDEVKEISGVPVLAQEVNVKDMNQLRSMMDELKQKLSSGVILLAAENNGKVQLVAGVTKDMLEKNMHAGNIVKQAATVCGGGGGGRPDMAQAGGKDPSKIKEALQSVEQYIVDTVK</sequence>
<name>SYA_OCEIH</name>
<keyword id="KW-0030">Aminoacyl-tRNA synthetase</keyword>
<keyword id="KW-0067">ATP-binding</keyword>
<keyword id="KW-0963">Cytoplasm</keyword>
<keyword id="KW-0436">Ligase</keyword>
<keyword id="KW-0479">Metal-binding</keyword>
<keyword id="KW-0547">Nucleotide-binding</keyword>
<keyword id="KW-0648">Protein biosynthesis</keyword>
<keyword id="KW-1185">Reference proteome</keyword>
<keyword id="KW-0694">RNA-binding</keyword>
<keyword id="KW-0820">tRNA-binding</keyword>
<keyword id="KW-0862">Zinc</keyword>
<dbReference type="EC" id="6.1.1.7" evidence="1"/>
<dbReference type="EMBL" id="BA000028">
    <property type="protein sequence ID" value="BAC13965.1"/>
    <property type="molecule type" value="Genomic_DNA"/>
</dbReference>
<dbReference type="RefSeq" id="WP_011066405.1">
    <property type="nucleotide sequence ID" value="NC_004193.1"/>
</dbReference>
<dbReference type="SMR" id="Q8EPS9"/>
<dbReference type="STRING" id="221109.gene:10734255"/>
<dbReference type="KEGG" id="oih:OB2009"/>
<dbReference type="eggNOG" id="COG0013">
    <property type="taxonomic scope" value="Bacteria"/>
</dbReference>
<dbReference type="HOGENOM" id="CLU_004485_1_1_9"/>
<dbReference type="OrthoDB" id="9803884at2"/>
<dbReference type="PhylomeDB" id="Q8EPS9"/>
<dbReference type="Proteomes" id="UP000000822">
    <property type="component" value="Chromosome"/>
</dbReference>
<dbReference type="GO" id="GO:0005829">
    <property type="term" value="C:cytosol"/>
    <property type="evidence" value="ECO:0007669"/>
    <property type="project" value="TreeGrafter"/>
</dbReference>
<dbReference type="GO" id="GO:0004813">
    <property type="term" value="F:alanine-tRNA ligase activity"/>
    <property type="evidence" value="ECO:0007669"/>
    <property type="project" value="UniProtKB-UniRule"/>
</dbReference>
<dbReference type="GO" id="GO:0002161">
    <property type="term" value="F:aminoacyl-tRNA deacylase activity"/>
    <property type="evidence" value="ECO:0007669"/>
    <property type="project" value="TreeGrafter"/>
</dbReference>
<dbReference type="GO" id="GO:0005524">
    <property type="term" value="F:ATP binding"/>
    <property type="evidence" value="ECO:0007669"/>
    <property type="project" value="UniProtKB-UniRule"/>
</dbReference>
<dbReference type="GO" id="GO:0140096">
    <property type="term" value="F:catalytic activity, acting on a protein"/>
    <property type="evidence" value="ECO:0007669"/>
    <property type="project" value="UniProtKB-ARBA"/>
</dbReference>
<dbReference type="GO" id="GO:0016740">
    <property type="term" value="F:transferase activity"/>
    <property type="evidence" value="ECO:0007669"/>
    <property type="project" value="UniProtKB-ARBA"/>
</dbReference>
<dbReference type="GO" id="GO:0000049">
    <property type="term" value="F:tRNA binding"/>
    <property type="evidence" value="ECO:0007669"/>
    <property type="project" value="UniProtKB-KW"/>
</dbReference>
<dbReference type="GO" id="GO:0008270">
    <property type="term" value="F:zinc ion binding"/>
    <property type="evidence" value="ECO:0007669"/>
    <property type="project" value="UniProtKB-UniRule"/>
</dbReference>
<dbReference type="GO" id="GO:0006419">
    <property type="term" value="P:alanyl-tRNA aminoacylation"/>
    <property type="evidence" value="ECO:0007669"/>
    <property type="project" value="UniProtKB-UniRule"/>
</dbReference>
<dbReference type="CDD" id="cd00673">
    <property type="entry name" value="AlaRS_core"/>
    <property type="match status" value="1"/>
</dbReference>
<dbReference type="FunFam" id="2.40.30.130:FF:000001">
    <property type="entry name" value="Alanine--tRNA ligase"/>
    <property type="match status" value="1"/>
</dbReference>
<dbReference type="FunFam" id="3.10.310.40:FF:000001">
    <property type="entry name" value="Alanine--tRNA ligase"/>
    <property type="match status" value="1"/>
</dbReference>
<dbReference type="FunFam" id="3.30.54.20:FF:000001">
    <property type="entry name" value="Alanine--tRNA ligase"/>
    <property type="match status" value="1"/>
</dbReference>
<dbReference type="FunFam" id="3.30.930.10:FF:000046">
    <property type="entry name" value="Alanine--tRNA ligase"/>
    <property type="match status" value="1"/>
</dbReference>
<dbReference type="FunFam" id="3.30.980.10:FF:000004">
    <property type="entry name" value="Alanine--tRNA ligase, cytoplasmic"/>
    <property type="match status" value="1"/>
</dbReference>
<dbReference type="Gene3D" id="2.40.30.130">
    <property type="match status" value="1"/>
</dbReference>
<dbReference type="Gene3D" id="3.10.310.40">
    <property type="match status" value="1"/>
</dbReference>
<dbReference type="Gene3D" id="3.30.54.20">
    <property type="match status" value="1"/>
</dbReference>
<dbReference type="Gene3D" id="6.10.250.550">
    <property type="match status" value="1"/>
</dbReference>
<dbReference type="Gene3D" id="3.30.930.10">
    <property type="entry name" value="Bira Bifunctional Protein, Domain 2"/>
    <property type="match status" value="1"/>
</dbReference>
<dbReference type="Gene3D" id="3.30.980.10">
    <property type="entry name" value="Threonyl-trna Synthetase, Chain A, domain 2"/>
    <property type="match status" value="1"/>
</dbReference>
<dbReference type="HAMAP" id="MF_00036_B">
    <property type="entry name" value="Ala_tRNA_synth_B"/>
    <property type="match status" value="1"/>
</dbReference>
<dbReference type="InterPro" id="IPR045864">
    <property type="entry name" value="aa-tRNA-synth_II/BPL/LPL"/>
</dbReference>
<dbReference type="InterPro" id="IPR002318">
    <property type="entry name" value="Ala-tRNA-lgiase_IIc"/>
</dbReference>
<dbReference type="InterPro" id="IPR018162">
    <property type="entry name" value="Ala-tRNA-ligase_IIc_anticod-bd"/>
</dbReference>
<dbReference type="InterPro" id="IPR018165">
    <property type="entry name" value="Ala-tRNA-synth_IIc_core"/>
</dbReference>
<dbReference type="InterPro" id="IPR018164">
    <property type="entry name" value="Ala-tRNA-synth_IIc_N"/>
</dbReference>
<dbReference type="InterPro" id="IPR050058">
    <property type="entry name" value="Ala-tRNA_ligase"/>
</dbReference>
<dbReference type="InterPro" id="IPR023033">
    <property type="entry name" value="Ala_tRNA_ligase_euk/bac"/>
</dbReference>
<dbReference type="InterPro" id="IPR003156">
    <property type="entry name" value="DHHA1_dom"/>
</dbReference>
<dbReference type="InterPro" id="IPR018163">
    <property type="entry name" value="Thr/Ala-tRNA-synth_IIc_edit"/>
</dbReference>
<dbReference type="InterPro" id="IPR009000">
    <property type="entry name" value="Transl_B-barrel_sf"/>
</dbReference>
<dbReference type="InterPro" id="IPR012947">
    <property type="entry name" value="tRNA_SAD"/>
</dbReference>
<dbReference type="NCBIfam" id="TIGR00344">
    <property type="entry name" value="alaS"/>
    <property type="match status" value="1"/>
</dbReference>
<dbReference type="PANTHER" id="PTHR11777:SF9">
    <property type="entry name" value="ALANINE--TRNA LIGASE, CYTOPLASMIC"/>
    <property type="match status" value="1"/>
</dbReference>
<dbReference type="PANTHER" id="PTHR11777">
    <property type="entry name" value="ALANYL-TRNA SYNTHETASE"/>
    <property type="match status" value="1"/>
</dbReference>
<dbReference type="Pfam" id="PF02272">
    <property type="entry name" value="DHHA1"/>
    <property type="match status" value="1"/>
</dbReference>
<dbReference type="Pfam" id="PF01411">
    <property type="entry name" value="tRNA-synt_2c"/>
    <property type="match status" value="1"/>
</dbReference>
<dbReference type="Pfam" id="PF07973">
    <property type="entry name" value="tRNA_SAD"/>
    <property type="match status" value="1"/>
</dbReference>
<dbReference type="PRINTS" id="PR00980">
    <property type="entry name" value="TRNASYNTHALA"/>
</dbReference>
<dbReference type="SMART" id="SM00863">
    <property type="entry name" value="tRNA_SAD"/>
    <property type="match status" value="1"/>
</dbReference>
<dbReference type="SUPFAM" id="SSF55681">
    <property type="entry name" value="Class II aaRS and biotin synthetases"/>
    <property type="match status" value="1"/>
</dbReference>
<dbReference type="SUPFAM" id="SSF101353">
    <property type="entry name" value="Putative anticodon-binding domain of alanyl-tRNA synthetase (AlaRS)"/>
    <property type="match status" value="1"/>
</dbReference>
<dbReference type="SUPFAM" id="SSF55186">
    <property type="entry name" value="ThrRS/AlaRS common domain"/>
    <property type="match status" value="1"/>
</dbReference>
<dbReference type="SUPFAM" id="SSF50447">
    <property type="entry name" value="Translation proteins"/>
    <property type="match status" value="1"/>
</dbReference>
<dbReference type="PROSITE" id="PS50860">
    <property type="entry name" value="AA_TRNA_LIGASE_II_ALA"/>
    <property type="match status" value="1"/>
</dbReference>
<evidence type="ECO:0000255" key="1">
    <source>
        <dbReference type="HAMAP-Rule" id="MF_00036"/>
    </source>
</evidence>
<reference key="1">
    <citation type="journal article" date="2002" name="Nucleic Acids Res.">
        <title>Genome sequence of Oceanobacillus iheyensis isolated from the Iheya Ridge and its unexpected adaptive capabilities to extreme environments.</title>
        <authorList>
            <person name="Takami H."/>
            <person name="Takaki Y."/>
            <person name="Uchiyama I."/>
        </authorList>
    </citation>
    <scope>NUCLEOTIDE SEQUENCE [LARGE SCALE GENOMIC DNA]</scope>
    <source>
        <strain>DSM 14371 / CIP 107618 / JCM 11309 / KCTC 3954 / HTE831</strain>
    </source>
</reference>
<organism>
    <name type="scientific">Oceanobacillus iheyensis (strain DSM 14371 / CIP 107618 / JCM 11309 / KCTC 3954 / HTE831)</name>
    <dbReference type="NCBI Taxonomy" id="221109"/>
    <lineage>
        <taxon>Bacteria</taxon>
        <taxon>Bacillati</taxon>
        <taxon>Bacillota</taxon>
        <taxon>Bacilli</taxon>
        <taxon>Bacillales</taxon>
        <taxon>Bacillaceae</taxon>
        <taxon>Oceanobacillus</taxon>
    </lineage>
</organism>